<evidence type="ECO:0000255" key="1">
    <source>
        <dbReference type="HAMAP-Rule" id="MF_01876"/>
    </source>
</evidence>
<evidence type="ECO:0000305" key="2"/>
<reference key="1">
    <citation type="journal article" date="2010" name="PLoS ONE">
        <title>The complete multipartite genome sequence of Cupriavidus necator JMP134, a versatile pollutant degrader.</title>
        <authorList>
            <person name="Lykidis A."/>
            <person name="Perez-Pantoja D."/>
            <person name="Ledger T."/>
            <person name="Mavromatis K."/>
            <person name="Anderson I.J."/>
            <person name="Ivanova N.N."/>
            <person name="Hooper S.D."/>
            <person name="Lapidus A."/>
            <person name="Lucas S."/>
            <person name="Gonzalez B."/>
            <person name="Kyrpides N.C."/>
        </authorList>
    </citation>
    <scope>NUCLEOTIDE SEQUENCE [LARGE SCALE GENOMIC DNA]</scope>
    <source>
        <strain>JMP134 / LMG 1197</strain>
    </source>
</reference>
<name>PSUG_CUPPJ</name>
<keyword id="KW-0326">Glycosidase</keyword>
<keyword id="KW-0378">Hydrolase</keyword>
<keyword id="KW-0456">Lyase</keyword>
<keyword id="KW-0464">Manganese</keyword>
<keyword id="KW-0479">Metal-binding</keyword>
<comment type="function">
    <text evidence="1">Catalyzes the reversible cleavage of pseudouridine 5'-phosphate (PsiMP) to ribose 5-phosphate and uracil. Functions biologically in the cleavage direction, as part of a pseudouridine degradation pathway.</text>
</comment>
<comment type="catalytic activity">
    <reaction evidence="1">
        <text>D-ribose 5-phosphate + uracil = psi-UMP + H2O</text>
        <dbReference type="Rhea" id="RHEA:18337"/>
        <dbReference type="ChEBI" id="CHEBI:15377"/>
        <dbReference type="ChEBI" id="CHEBI:17568"/>
        <dbReference type="ChEBI" id="CHEBI:58380"/>
        <dbReference type="ChEBI" id="CHEBI:78346"/>
        <dbReference type="EC" id="4.2.1.70"/>
    </reaction>
</comment>
<comment type="cofactor">
    <cofactor evidence="1">
        <name>Mn(2+)</name>
        <dbReference type="ChEBI" id="CHEBI:29035"/>
    </cofactor>
    <text evidence="1">Binds 1 Mn(2+) ion per subunit.</text>
</comment>
<comment type="subunit">
    <text evidence="1">Homotrimer.</text>
</comment>
<comment type="similarity">
    <text evidence="1">Belongs to the pseudouridine-5'-phosphate glycosidase family.</text>
</comment>
<comment type="sequence caution" evidence="2">
    <conflict type="erroneous initiation">
        <sequence resource="EMBL-CDS" id="AAZ64861"/>
    </conflict>
</comment>
<accession>Q46PS3</accession>
<protein>
    <recommendedName>
        <fullName evidence="1">Pseudouridine-5'-phosphate glycosidase</fullName>
        <shortName evidence="1">PsiMP glycosidase</shortName>
        <ecNumber evidence="1">4.2.1.70</ecNumber>
    </recommendedName>
</protein>
<proteinExistence type="inferred from homology"/>
<organism>
    <name type="scientific">Cupriavidus pinatubonensis (strain JMP 134 / LMG 1197)</name>
    <name type="common">Cupriavidus necator (strain JMP 134)</name>
    <dbReference type="NCBI Taxonomy" id="264198"/>
    <lineage>
        <taxon>Bacteria</taxon>
        <taxon>Pseudomonadati</taxon>
        <taxon>Pseudomonadota</taxon>
        <taxon>Betaproteobacteria</taxon>
        <taxon>Burkholderiales</taxon>
        <taxon>Burkholderiaceae</taxon>
        <taxon>Cupriavidus</taxon>
    </lineage>
</organism>
<feature type="chain" id="PRO_0000390537" description="Pseudouridine-5'-phosphate glycosidase">
    <location>
        <begin position="1"/>
        <end position="314"/>
    </location>
</feature>
<feature type="active site" description="Proton donor" evidence="1">
    <location>
        <position position="30"/>
    </location>
</feature>
<feature type="active site" description="Nucleophile" evidence="1">
    <location>
        <position position="164"/>
    </location>
</feature>
<feature type="binding site" evidence="1">
    <location>
        <position position="91"/>
    </location>
    <ligand>
        <name>substrate</name>
    </ligand>
</feature>
<feature type="binding site" evidence="1">
    <location>
        <position position="111"/>
    </location>
    <ligand>
        <name>substrate</name>
    </ligand>
</feature>
<feature type="binding site" evidence="1">
    <location>
        <position position="143"/>
    </location>
    <ligand>
        <name>Mn(2+)</name>
        <dbReference type="ChEBI" id="CHEBI:29035"/>
    </ligand>
</feature>
<feature type="binding site" evidence="1">
    <location>
        <begin position="145"/>
        <end position="147"/>
    </location>
    <ligand>
        <name>substrate</name>
    </ligand>
</feature>
<sequence>MSTDLAQSWLTLSAPVAAARAAGRPLVALESTIIAHGMPYPENVRTAHEVEALILELGAEPATIALIDGRIRVGLSDDELERLGRSGKAHKVSRRDLPAVLTSGELGATTVAGTMICAALAGIEVFVTGGIGGVHRGAQETFDISADLQELARTSVAVVCAGAKSILDIGLTLEYLETQGVPVLTCEQENFAAFYKRDSGFRADYRLDDPAEQARFIRTKWDLGLAGGVLLSTPVPEAAAMASEEIDALTQQALDEAQAQGITGKAVTPFLLARIKALTGGRSLATNIALVKHNAEVGARLALALAQAARGAVA</sequence>
<dbReference type="EC" id="4.2.1.70" evidence="1"/>
<dbReference type="EMBL" id="CP000091">
    <property type="protein sequence ID" value="AAZ64861.1"/>
    <property type="status" value="ALT_INIT"/>
    <property type="molecule type" value="Genomic_DNA"/>
</dbReference>
<dbReference type="SMR" id="Q46PS3"/>
<dbReference type="STRING" id="264198.Reut_B5516"/>
<dbReference type="KEGG" id="reu:Reut_B5516"/>
<dbReference type="eggNOG" id="COG2313">
    <property type="taxonomic scope" value="Bacteria"/>
</dbReference>
<dbReference type="HOGENOM" id="CLU_012201_0_1_4"/>
<dbReference type="OrthoDB" id="9805870at2"/>
<dbReference type="GO" id="GO:0005737">
    <property type="term" value="C:cytoplasm"/>
    <property type="evidence" value="ECO:0007669"/>
    <property type="project" value="TreeGrafter"/>
</dbReference>
<dbReference type="GO" id="GO:0016798">
    <property type="term" value="F:hydrolase activity, acting on glycosyl bonds"/>
    <property type="evidence" value="ECO:0007669"/>
    <property type="project" value="UniProtKB-KW"/>
</dbReference>
<dbReference type="GO" id="GO:0046872">
    <property type="term" value="F:metal ion binding"/>
    <property type="evidence" value="ECO:0007669"/>
    <property type="project" value="UniProtKB-KW"/>
</dbReference>
<dbReference type="GO" id="GO:0004730">
    <property type="term" value="F:pseudouridylate synthase activity"/>
    <property type="evidence" value="ECO:0007669"/>
    <property type="project" value="UniProtKB-UniRule"/>
</dbReference>
<dbReference type="GO" id="GO:0046113">
    <property type="term" value="P:nucleobase catabolic process"/>
    <property type="evidence" value="ECO:0007669"/>
    <property type="project" value="UniProtKB-UniRule"/>
</dbReference>
<dbReference type="Gene3D" id="3.40.1790.10">
    <property type="entry name" value="Indigoidine synthase domain"/>
    <property type="match status" value="1"/>
</dbReference>
<dbReference type="HAMAP" id="MF_01876">
    <property type="entry name" value="PsiMP_glycosidase"/>
    <property type="match status" value="1"/>
</dbReference>
<dbReference type="InterPro" id="IPR022830">
    <property type="entry name" value="Indigdn_synthA-like"/>
</dbReference>
<dbReference type="InterPro" id="IPR007342">
    <property type="entry name" value="PsuG"/>
</dbReference>
<dbReference type="PANTHER" id="PTHR42909:SF1">
    <property type="entry name" value="CARBOHYDRATE KINASE PFKB DOMAIN-CONTAINING PROTEIN"/>
    <property type="match status" value="1"/>
</dbReference>
<dbReference type="PANTHER" id="PTHR42909">
    <property type="entry name" value="ZGC:136858"/>
    <property type="match status" value="1"/>
</dbReference>
<dbReference type="Pfam" id="PF04227">
    <property type="entry name" value="Indigoidine_A"/>
    <property type="match status" value="1"/>
</dbReference>
<dbReference type="SUPFAM" id="SSF110581">
    <property type="entry name" value="Indigoidine synthase A-like"/>
    <property type="match status" value="1"/>
</dbReference>
<gene>
    <name evidence="1" type="primary">psuG</name>
    <name type="ordered locus">Reut_B5516</name>
</gene>